<gene>
    <name evidence="14 16" type="primary">ARO7</name>
    <name type="synonym">OSM2</name>
    <name type="ordered locus">YPR060C</name>
    <name type="ORF">YP9499.15C</name>
</gene>
<organism>
    <name type="scientific">Saccharomyces cerevisiae (strain ATCC 204508 / S288c)</name>
    <name type="common">Baker's yeast</name>
    <dbReference type="NCBI Taxonomy" id="559292"/>
    <lineage>
        <taxon>Eukaryota</taxon>
        <taxon>Fungi</taxon>
        <taxon>Dikarya</taxon>
        <taxon>Ascomycota</taxon>
        <taxon>Saccharomycotina</taxon>
        <taxon>Saccharomycetes</taxon>
        <taxon>Saccharomycetales</taxon>
        <taxon>Saccharomycetaceae</taxon>
        <taxon>Saccharomyces</taxon>
    </lineage>
</organism>
<protein>
    <recommendedName>
        <fullName evidence="14">Chorismate mutase</fullName>
        <shortName evidence="11">CM</shortName>
        <ecNumber evidence="2 3 5 6 7 10">5.4.99.5</ecNumber>
    </recommendedName>
</protein>
<accession>P32178</accession>
<accession>D6W465</accession>
<reference key="1">
    <citation type="journal article" date="1989" name="J. Bacteriol.">
        <title>A single point mutation results in a constitutively activated and feedback-resistant chorismate mutase of Saccharomyces cerevisiae.</title>
        <authorList>
            <person name="Schmidheini T."/>
            <person name="Sperisen P."/>
            <person name="Paravicini G."/>
            <person name="Huetter R."/>
            <person name="Braus G.H."/>
        </authorList>
    </citation>
    <scope>NUCLEOTIDE SEQUENCE [GENOMIC DNA]</scope>
    <scope>FUNCTION</scope>
    <scope>CATALYTIC ACTIVITY</scope>
    <scope>ACTIVITY REGULATION</scope>
    <scope>INDUCTION</scope>
    <scope>MUTAGENESIS OF THR-226</scope>
    <source>
        <strain>ATCC 26109 / X2180</strain>
    </source>
</reference>
<reference key="2">
    <citation type="journal article" date="1997" name="Nature">
        <title>The nucleotide sequence of Saccharomyces cerevisiae chromosome XVI.</title>
        <authorList>
            <person name="Bussey H."/>
            <person name="Storms R.K."/>
            <person name="Ahmed A."/>
            <person name="Albermann K."/>
            <person name="Allen E."/>
            <person name="Ansorge W."/>
            <person name="Araujo R."/>
            <person name="Aparicio A."/>
            <person name="Barrell B.G."/>
            <person name="Badcock K."/>
            <person name="Benes V."/>
            <person name="Botstein D."/>
            <person name="Bowman S."/>
            <person name="Brueckner M."/>
            <person name="Carpenter J."/>
            <person name="Cherry J.M."/>
            <person name="Chung E."/>
            <person name="Churcher C.M."/>
            <person name="Coster F."/>
            <person name="Davis K."/>
            <person name="Davis R.W."/>
            <person name="Dietrich F.S."/>
            <person name="Delius H."/>
            <person name="DiPaolo T."/>
            <person name="Dubois E."/>
            <person name="Duesterhoeft A."/>
            <person name="Duncan M."/>
            <person name="Floeth M."/>
            <person name="Fortin N."/>
            <person name="Friesen J.D."/>
            <person name="Fritz C."/>
            <person name="Goffeau A."/>
            <person name="Hall J."/>
            <person name="Hebling U."/>
            <person name="Heumann K."/>
            <person name="Hilbert H."/>
            <person name="Hillier L.W."/>
            <person name="Hunicke-Smith S."/>
            <person name="Hyman R.W."/>
            <person name="Johnston M."/>
            <person name="Kalman S."/>
            <person name="Kleine K."/>
            <person name="Komp C."/>
            <person name="Kurdi O."/>
            <person name="Lashkari D."/>
            <person name="Lew H."/>
            <person name="Lin A."/>
            <person name="Lin D."/>
            <person name="Louis E.J."/>
            <person name="Marathe R."/>
            <person name="Messenguy F."/>
            <person name="Mewes H.-W."/>
            <person name="Mirtipati S."/>
            <person name="Moestl D."/>
            <person name="Mueller-Auer S."/>
            <person name="Namath A."/>
            <person name="Nentwich U."/>
            <person name="Oefner P."/>
            <person name="Pearson D."/>
            <person name="Petel F.X."/>
            <person name="Pohl T.M."/>
            <person name="Purnelle B."/>
            <person name="Rajandream M.A."/>
            <person name="Rechmann S."/>
            <person name="Rieger M."/>
            <person name="Riles L."/>
            <person name="Roberts D."/>
            <person name="Schaefer M."/>
            <person name="Scharfe M."/>
            <person name="Scherens B."/>
            <person name="Schramm S."/>
            <person name="Schroeder M."/>
            <person name="Sdicu A.-M."/>
            <person name="Tettelin H."/>
            <person name="Urrestarazu L.A."/>
            <person name="Ushinsky S."/>
            <person name="Vierendeels F."/>
            <person name="Vissers S."/>
            <person name="Voss H."/>
            <person name="Walsh S.V."/>
            <person name="Wambutt R."/>
            <person name="Wang Y."/>
            <person name="Wedler E."/>
            <person name="Wedler H."/>
            <person name="Winnett E."/>
            <person name="Zhong W.-W."/>
            <person name="Zollner A."/>
            <person name="Vo D.H."/>
            <person name="Hani J."/>
        </authorList>
    </citation>
    <scope>NUCLEOTIDE SEQUENCE [LARGE SCALE GENOMIC DNA]</scope>
    <source>
        <strain>ATCC 204508 / S288c</strain>
    </source>
</reference>
<reference key="3">
    <citation type="journal article" date="2014" name="G3 (Bethesda)">
        <title>The reference genome sequence of Saccharomyces cerevisiae: Then and now.</title>
        <authorList>
            <person name="Engel S.R."/>
            <person name="Dietrich F.S."/>
            <person name="Fisk D.G."/>
            <person name="Binkley G."/>
            <person name="Balakrishnan R."/>
            <person name="Costanzo M.C."/>
            <person name="Dwight S.S."/>
            <person name="Hitz B.C."/>
            <person name="Karra K."/>
            <person name="Nash R.S."/>
            <person name="Weng S."/>
            <person name="Wong E.D."/>
            <person name="Lloyd P."/>
            <person name="Skrzypek M.S."/>
            <person name="Miyasato S.R."/>
            <person name="Simison M."/>
            <person name="Cherry J.M."/>
        </authorList>
    </citation>
    <scope>GENOME REANNOTATION</scope>
    <source>
        <strain>ATCC 204508 / S288c</strain>
    </source>
</reference>
<reference key="4">
    <citation type="journal article" date="2007" name="Genome Res.">
        <title>Approaching a complete repository of sequence-verified protein-encoding clones for Saccharomyces cerevisiae.</title>
        <authorList>
            <person name="Hu Y."/>
            <person name="Rolfs A."/>
            <person name="Bhullar B."/>
            <person name="Murthy T.V.S."/>
            <person name="Zhu C."/>
            <person name="Berger M.F."/>
            <person name="Camargo A.A."/>
            <person name="Kelley F."/>
            <person name="McCarron S."/>
            <person name="Jepson D."/>
            <person name="Richardson A."/>
            <person name="Raphael J."/>
            <person name="Moreira D."/>
            <person name="Taycher E."/>
            <person name="Zuo D."/>
            <person name="Mohr S."/>
            <person name="Kane M.F."/>
            <person name="Williamson J."/>
            <person name="Simpson A.J.G."/>
            <person name="Bulyk M.L."/>
            <person name="Harlow E."/>
            <person name="Marsischky G."/>
            <person name="Kolodner R.D."/>
            <person name="LaBaer J."/>
        </authorList>
    </citation>
    <scope>NUCLEOTIDE SEQUENCE [GENOMIC DNA]</scope>
    <source>
        <strain>ATCC 204508 / S288c</strain>
    </source>
</reference>
<reference key="5">
    <citation type="journal article" date="1990" name="Biochemistry">
        <title>Yeast allosteric chorismate mutase is locked in the activated state by a single amino acid substitution.</title>
        <authorList>
            <person name="Schmidheini T."/>
            <person name="Moesch H.U."/>
            <person name="Evans J.N."/>
            <person name="Braus G."/>
        </authorList>
    </citation>
    <scope>PROTEIN SEQUENCE OF 30-33; 119-124; 133-137; 163-168 AND 191-204</scope>
    <scope>FUNCTION</scope>
    <scope>CATALYTIC ACTIVITY</scope>
    <scope>ACTIVITY REGULATION</scope>
    <scope>BIOPHYSICOCHEMICAL PROPERTIES</scope>
    <scope>PATHWAY</scope>
    <scope>SUBUNIT</scope>
    <scope>MUTAGENESIS OF THR-226</scope>
</reference>
<reference key="6">
    <citation type="journal article" date="1998" name="J. Biol. Chem.">
        <title>Tyrosine and tryptophan act through the same binding site at the dimer interface of yeast chorismate mutase.</title>
        <authorList>
            <person name="Schnappauf G."/>
            <person name="Krappmann S."/>
            <person name="Braus G.H."/>
        </authorList>
    </citation>
    <scope>FUNCTION</scope>
    <scope>CATALYTIC ACTIVITY</scope>
    <scope>ACTIVITY REGULATION</scope>
    <scope>BIOPHYSICOCHEMICAL PROPERTIES</scope>
    <scope>TYROSINE AND TRYPTOPHAN BINDING</scope>
    <scope>MUTAGENESIS OF ARG-75; ARG-76; GLY-141; SER-142 AND THR-145</scope>
</reference>
<reference key="7">
    <citation type="journal article" date="1999" name="J. Biol. Chem.">
        <title>The aroC gene of Aspergillus nidulans codes for a monofunctional, allosterically regulated chorismate mutase.</title>
        <authorList>
            <person name="Krappmann S."/>
            <person name="Helmstaedt K."/>
            <person name="Gerstberger T."/>
            <person name="Eckert S."/>
            <person name="Hoffmann B."/>
            <person name="Hoppert M."/>
            <person name="Schnappauf G."/>
            <person name="Braus G.H."/>
        </authorList>
    </citation>
    <scope>FUNCTION</scope>
    <scope>CATALYTIC ACTIVITY</scope>
    <scope>ACTIVITY REGULATION</scope>
    <scope>MUTAGENESIS OF THR-226</scope>
    <source>
        <strain evidence="11">ATCC 26786 / X2180-1A</strain>
    </source>
</reference>
<reference key="8">
    <citation type="journal article" date="2000" name="J. Bacteriol.">
        <title>HARO7 encodes chorismate mutase of the methylotrophic yeast Hansenula polymorpha and is derepressed upon methanol utilization.</title>
        <authorList>
            <person name="Krappmann S."/>
            <person name="Pries R."/>
            <person name="Gellissen G."/>
            <person name="Hiller M."/>
            <person name="Braus G.H."/>
        </authorList>
    </citation>
    <scope>FUNCTION</scope>
    <scope>CATALYTIC ACTIVITY</scope>
    <scope>BIOPHYSICOCHEMICAL PROPERTIES</scope>
    <source>
        <strain evidence="12">ATCC 26786 / X2180-1A</strain>
    </source>
</reference>
<reference key="9">
    <citation type="journal article" date="2002" name="Eukaryot. Cell">
        <title>Amino acid-dependent Gcn4p stability regulation occurs exclusively in the yeast nucleus.</title>
        <authorList>
            <person name="Pries R."/>
            <person name="Boemeke K."/>
            <person name="Irniger S."/>
            <person name="Grundmann O."/>
            <person name="Braus G.H."/>
        </authorList>
    </citation>
    <scope>SUBCELLULAR LOCATION</scope>
    <source>
        <strain evidence="13">ATCC 200060 / W303</strain>
    </source>
</reference>
<reference key="10">
    <citation type="journal article" date="2012" name="Proc. Natl. Acad. Sci. U.S.A.">
        <title>N-terminal acetylome analyses and functional insights of the N-terminal acetyltransferase NatB.</title>
        <authorList>
            <person name="Van Damme P."/>
            <person name="Lasa M."/>
            <person name="Polevoda B."/>
            <person name="Gazquez C."/>
            <person name="Elosegui-Artola A."/>
            <person name="Kim D.S."/>
            <person name="De Juan-Pardo E."/>
            <person name="Demeyer K."/>
            <person name="Hole K."/>
            <person name="Larrea E."/>
            <person name="Timmerman E."/>
            <person name="Prieto J."/>
            <person name="Arnesen T."/>
            <person name="Sherman F."/>
            <person name="Gevaert K."/>
            <person name="Aldabe R."/>
        </authorList>
    </citation>
    <scope>IDENTIFICATION BY MASS SPECTROMETRY [LARGE SCALE ANALYSIS]</scope>
</reference>
<reference key="11">
    <citation type="journal article" date="2019" name="Biochemistry">
        <title>Energy and Enzyme Activity Landscapes of Yeast Chorismate Mutase at Cellular Concentrations of Allosteric Effectors.</title>
        <authorList>
            <person name="Gorman S.D."/>
            <person name="Boehr D.D."/>
        </authorList>
    </citation>
    <scope>FUNCTION</scope>
    <scope>CATALYTIC ACTIVITY</scope>
    <scope>ACTIVITY REGULATION</scope>
</reference>
<reference evidence="17" key="12">
    <citation type="journal article" date="1994" name="Proc. Natl. Acad. Sci. U.S.A.">
        <title>The crystal structure of allosteric chorismate mutase at 2.2-A resolution.</title>
        <authorList>
            <person name="Xue Y."/>
            <person name="Lipscomb W.N."/>
            <person name="Graf R."/>
            <person name="Schnappauf G."/>
            <person name="Braus G."/>
        </authorList>
    </citation>
    <scope>X-RAY CRYSTALLOGRAPHY (2.2 ANGSTROMS) IN COMPLEX WITH TRYPTOPHAN</scope>
</reference>
<reference evidence="18" key="13">
    <citation type="journal article" date="1996" name="Proc. Natl. Acad. Sci. U.S.A.">
        <title>Crystal structure of the T state of allosteric yeast chorismate mutase and comparison with the R state.</title>
        <authorList>
            <person name="Straeter N."/>
            <person name="Haakansson K."/>
            <person name="Schnappauf G."/>
            <person name="Braus G."/>
            <person name="Lipscomb W.N."/>
        </authorList>
    </citation>
    <scope>X-RAY CRYSTALLOGRAPHY (2.8 ANGSTROMS) IN COMPLEX WITH TYROSINE</scope>
</reference>
<reference evidence="19 20 21" key="14">
    <citation type="journal article" date="1997" name="Structure">
        <title>Mechanisms of catalysis and allosteric regulation of yeast chorismate mutase from crystal structures.</title>
        <authorList>
            <person name="Straeter N."/>
            <person name="Schnappauf G."/>
            <person name="Braus G."/>
            <person name="Lipscomb W.N."/>
        </authorList>
    </citation>
    <scope>X-RAY CRYSTALLOGRAPHY (2.0 ANGSTROMS)IN COMPLEXES WITH TRYPTOPHAN; TYROSINE AND INHIBITOR</scope>
</reference>
<comment type="function">
    <text evidence="2 3 5 6 7 10 15">Catalyzes the Claisen rearrangement of chorismate to prephenate (PubMed:10428795, PubMed:10894726, PubMed:2187528, PubMed:2646272, PubMed:31498992, PubMed:9642265). Acts at the first branch point in the aromatic amino acid pathway where it steers biosynthesis towards phenylalanine and tyrosine, and away from tryptophan (Probable).</text>
</comment>
<comment type="catalytic activity">
    <reaction evidence="2 3 5 6 7 10">
        <text>chorismate = prephenate</text>
        <dbReference type="Rhea" id="RHEA:13897"/>
        <dbReference type="ChEBI" id="CHEBI:29748"/>
        <dbReference type="ChEBI" id="CHEBI:29934"/>
        <dbReference type="EC" id="5.4.99.5"/>
    </reaction>
    <physiologicalReaction direction="left-to-right" evidence="2 3 5 6 7 10">
        <dbReference type="Rhea" id="RHEA:13898"/>
    </physiologicalReaction>
</comment>
<comment type="activity regulation">
    <text evidence="2 5 6 7 10">Each dimer has two allosteric binding sites that can bind the regulatory effectors tryptophan or tyrosine (PubMed:10428795, PubMed:2187528, PubMed:31498992, PubMed:9642265). Can bind either one tryptophan or one tyrosine, two tryptophan or two tyrosine or one tryptophan and one tyrosine, which differentially affect the catalytic activity (PubMed:31498992). Activated by tryptophan and subject to feedback inhibition by tyrosine (PubMed:10428795, PubMed:2187528, PubMed:2646272, PubMed:31498992). In the presence of both tryptophan and tyrosine, the enzyme is in the activated state (PubMed:2646272, PubMed:31498992).</text>
</comment>
<comment type="biophysicochemical properties">
    <kinetics>
        <KM evidence="5 10">3.8 mM for chorismate (at 30 degrees Celsius)</KM>
        <KM evidence="10">0.4 mM for chorismate (in the presence of 10 uM of tryptophan and at 30 degrees Celsius)</KM>
        <KM evidence="10">0.4 mM for chorismate (in the presence of 100 uM of phenylalanine and at 30 degrees Celsius)</KM>
        <text evidence="5 10">kcat is 176 sec(-1) for chorismate (PubMed:2187528). kcat is 176 sec(-1) for chorismate (in the presence of 10 uM of tryptophan) (PubMed:2187528). kcat is 348 sec(-1) for chorismate (in the presence of 10 uM of tryptophan and at 30 degrees Celsius) (PubMed:9642265). kcat is 129 sec(-1) for chorismate (in the presence of 300 uM of tyrosine) (PubMed:2187528). kcat is 387 sec(-1) for chorismate (in the presence of 100 uM of tyrosine and at 30 degrees Celsius) (PubMed:9642265). kcat is 320 sec(-1) for chorismate (in the presence of 100 uM of phenylalanine and at 30 degrees Celsius) (PubMed:9642265).</text>
    </kinetics>
    <phDependence>
        <text evidence="5">Optimum pH isin the absence of effectors. Optimum pH is 7 in the presence of tryptophan. Optimum pH is 5 in the presence of tyrosine.</text>
    </phDependence>
    <temperatureDependence>
        <text evidence="3">Optimum temperature is &lt;38 degrees Celsius.</text>
    </temperatureDependence>
</comment>
<comment type="pathway">
    <text evidence="15">Metabolic intermediate biosynthesis; prephenate biosynthesis; prephenate from chorismate: step 1/1.</text>
</comment>
<comment type="subunit">
    <text evidence="5">Homodimer.</text>
</comment>
<comment type="subcellular location">
    <subcellularLocation>
        <location evidence="4">Cytoplasm</location>
    </subcellularLocation>
</comment>
<comment type="induction">
    <text evidence="6">Not affected by altering tryptophan or tyrosine levels.</text>
</comment>
<proteinExistence type="evidence at protein level"/>
<keyword id="KW-0002">3D-structure</keyword>
<keyword id="KW-0021">Allosteric enzyme</keyword>
<keyword id="KW-0028">Amino-acid biosynthesis</keyword>
<keyword id="KW-0057">Aromatic amino acid biosynthesis</keyword>
<keyword id="KW-0963">Cytoplasm</keyword>
<keyword id="KW-0903">Direct protein sequencing</keyword>
<keyword id="KW-0413">Isomerase</keyword>
<keyword id="KW-0584">Phenylalanine biosynthesis</keyword>
<keyword id="KW-1185">Reference proteome</keyword>
<keyword id="KW-0827">Tyrosine biosynthesis</keyword>
<feature type="chain" id="PRO_0000119204" description="Chorismate mutase">
    <location>
        <begin position="1"/>
        <end position="256"/>
    </location>
</feature>
<feature type="domain" description="Chorismate mutase" evidence="1">
    <location>
        <begin position="3"/>
        <end position="255"/>
    </location>
</feature>
<feature type="binding site" evidence="9 18">
    <location>
        <position position="75"/>
    </location>
    <ligand>
        <name>L-tyrosine</name>
        <dbReference type="ChEBI" id="CHEBI:58315"/>
        <note>allosteric effector</note>
    </ligand>
</feature>
<feature type="binding site" evidence="9 18">
    <location>
        <position position="76"/>
    </location>
    <ligand>
        <name>L-tyrosine</name>
        <dbReference type="ChEBI" id="CHEBI:58315"/>
        <note>allosteric effector</note>
    </ligand>
</feature>
<feature type="binding site" evidence="8 17">
    <location>
        <position position="138"/>
    </location>
    <ligand>
        <name>L-tryptophan</name>
        <dbReference type="ChEBI" id="CHEBI:57912"/>
        <note>allosteric effector</note>
    </ligand>
</feature>
<feature type="binding site" evidence="8 17">
    <location>
        <position position="139"/>
    </location>
    <ligand>
        <name>L-tryptophan</name>
        <dbReference type="ChEBI" id="CHEBI:57912"/>
        <note>allosteric effector</note>
    </ligand>
</feature>
<feature type="binding site" evidence="9 18">
    <location>
        <position position="139"/>
    </location>
    <ligand>
        <name>L-tyrosine</name>
        <dbReference type="ChEBI" id="CHEBI:58315"/>
        <note>allosteric effector</note>
    </ligand>
</feature>
<feature type="binding site" evidence="8 17">
    <location>
        <position position="141"/>
    </location>
    <ligand>
        <name>L-tryptophan</name>
        <dbReference type="ChEBI" id="CHEBI:57912"/>
        <note>allosteric effector</note>
    </ligand>
</feature>
<feature type="binding site" evidence="9 18">
    <location>
        <position position="141"/>
    </location>
    <ligand>
        <name>L-tyrosine</name>
        <dbReference type="ChEBI" id="CHEBI:58315"/>
        <note>allosteric effector</note>
    </ligand>
</feature>
<feature type="binding site" evidence="8 17">
    <location>
        <position position="142"/>
    </location>
    <ligand>
        <name>L-tryptophan</name>
        <dbReference type="ChEBI" id="CHEBI:57912"/>
        <note>allosteric effector</note>
    </ligand>
</feature>
<feature type="binding site" evidence="9 18">
    <location>
        <position position="142"/>
    </location>
    <ligand>
        <name>L-tyrosine</name>
        <dbReference type="ChEBI" id="CHEBI:58315"/>
        <note>allosteric effector</note>
    </ligand>
</feature>
<feature type="binding site" evidence="9 18">
    <location>
        <position position="145"/>
    </location>
    <ligand>
        <name>L-tyrosine</name>
        <dbReference type="ChEBI" id="CHEBI:58315"/>
        <note>allosteric effector</note>
    </ligand>
</feature>
<feature type="mutagenesis site" description="Severely decreases tyrosine and tryptophan binding, resulting in loss of enzyme activity regulation by effectors." evidence="10">
    <original>R</original>
    <variation>A</variation>
    <location>
        <position position="75"/>
    </location>
</feature>
<feature type="mutagenesis site" description="Severely decreases tyrosine and tryptophan binding, resulting in loss of enzyme activity regulation by effectors." evidence="10">
    <original>R</original>
    <variation>A</variation>
    <location>
        <position position="76"/>
    </location>
</feature>
<feature type="mutagenesis site" description="Abolishes tyrosine and tryptophan binding, resulting in loss of enzyme activity regulation by effectors." evidence="10">
    <original>G</original>
    <variation>S</variation>
    <location>
        <position position="141"/>
    </location>
</feature>
<feature type="mutagenesis site" description="Decreases tyrosine and tryptophan binding, resulting in attenuated enzyme activity regulation by effectors." evidence="10">
    <original>S</original>
    <variation>A</variation>
    <location>
        <position position="142"/>
    </location>
</feature>
<feature type="mutagenesis site" description="Decreases tyrosine binding, resulting in loss of enzyme inhibition by tyrosine. Enhances activation by phenylalanine." evidence="10">
    <original>T</original>
    <variation>V</variation>
    <location>
        <position position="145"/>
    </location>
</feature>
<feature type="mutagenesis site" description="Constitutively inactive. Unresponsive to tryptophan activation." evidence="2">
    <original>T</original>
    <variation>D</variation>
    <location>
        <position position="226"/>
    </location>
</feature>
<feature type="mutagenesis site" description="Constitutively active. Unresponsive to tryptophan activation and tyrosine feedback inhibition." evidence="2 5 6">
    <original>T</original>
    <variation>I</variation>
    <location>
        <position position="226"/>
    </location>
</feature>
<feature type="helix" evidence="24">
    <location>
        <begin position="6"/>
        <end position="9"/>
    </location>
</feature>
<feature type="helix" evidence="24">
    <location>
        <begin position="12"/>
        <end position="34"/>
    </location>
</feature>
<feature type="helix" evidence="24">
    <location>
        <begin position="40"/>
        <end position="42"/>
    </location>
</feature>
<feature type="strand" evidence="22">
    <location>
        <begin position="48"/>
        <end position="50"/>
    </location>
</feature>
<feature type="helix" evidence="24">
    <location>
        <begin position="59"/>
        <end position="73"/>
    </location>
</feature>
<feature type="helix" evidence="24">
    <location>
        <begin position="76"/>
        <end position="78"/>
    </location>
</feature>
<feature type="turn" evidence="24">
    <location>
        <begin position="87"/>
        <end position="89"/>
    </location>
</feature>
<feature type="helix" evidence="24">
    <location>
        <begin position="108"/>
        <end position="110"/>
    </location>
</feature>
<feature type="helix" evidence="24">
    <location>
        <begin position="114"/>
        <end position="124"/>
    </location>
</feature>
<feature type="helix" evidence="24">
    <location>
        <begin position="126"/>
        <end position="129"/>
    </location>
</feature>
<feature type="strand" evidence="24">
    <location>
        <begin position="130"/>
        <end position="134"/>
    </location>
</feature>
<feature type="helix" evidence="23">
    <location>
        <begin position="137"/>
        <end position="139"/>
    </location>
</feature>
<feature type="helix" evidence="24">
    <location>
        <begin position="140"/>
        <end position="159"/>
    </location>
</feature>
<feature type="helix" evidence="24">
    <location>
        <begin position="161"/>
        <end position="170"/>
    </location>
</feature>
<feature type="helix" evidence="24">
    <location>
        <begin position="173"/>
        <end position="181"/>
    </location>
</feature>
<feature type="helix" evidence="24">
    <location>
        <begin position="185"/>
        <end position="191"/>
    </location>
</feature>
<feature type="helix" evidence="24">
    <location>
        <begin position="195"/>
        <end position="211"/>
    </location>
</feature>
<feature type="strand" evidence="22">
    <location>
        <begin position="212"/>
        <end position="214"/>
    </location>
</feature>
<feature type="helix" evidence="24">
    <location>
        <begin position="227"/>
        <end position="236"/>
    </location>
</feature>
<feature type="helix" evidence="24">
    <location>
        <begin position="238"/>
        <end position="251"/>
    </location>
</feature>
<feature type="turn" evidence="22">
    <location>
        <begin position="252"/>
        <end position="254"/>
    </location>
</feature>
<evidence type="ECO:0000255" key="1">
    <source>
        <dbReference type="PROSITE-ProRule" id="PRU00516"/>
    </source>
</evidence>
<evidence type="ECO:0000269" key="2">
    <source>
    </source>
</evidence>
<evidence type="ECO:0000269" key="3">
    <source>
    </source>
</evidence>
<evidence type="ECO:0000269" key="4">
    <source>
    </source>
</evidence>
<evidence type="ECO:0000269" key="5">
    <source>
    </source>
</evidence>
<evidence type="ECO:0000269" key="6">
    <source>
    </source>
</evidence>
<evidence type="ECO:0000269" key="7">
    <source>
    </source>
</evidence>
<evidence type="ECO:0000269" key="8">
    <source>
    </source>
</evidence>
<evidence type="ECO:0000269" key="9">
    <source>
    </source>
</evidence>
<evidence type="ECO:0000269" key="10">
    <source>
    </source>
</evidence>
<evidence type="ECO:0000303" key="11">
    <source>
    </source>
</evidence>
<evidence type="ECO:0000303" key="12">
    <source>
    </source>
</evidence>
<evidence type="ECO:0000303" key="13">
    <source>
    </source>
</evidence>
<evidence type="ECO:0000303" key="14">
    <source>
    </source>
</evidence>
<evidence type="ECO:0000305" key="15">
    <source>
    </source>
</evidence>
<evidence type="ECO:0000312" key="16">
    <source>
        <dbReference type="SGD" id="S000006264"/>
    </source>
</evidence>
<evidence type="ECO:0007744" key="17">
    <source>
        <dbReference type="PDB" id="1CSM"/>
    </source>
</evidence>
<evidence type="ECO:0007744" key="18">
    <source>
        <dbReference type="PDB" id="2CSM"/>
    </source>
</evidence>
<evidence type="ECO:0007744" key="19">
    <source>
        <dbReference type="PDB" id="3CSM"/>
    </source>
</evidence>
<evidence type="ECO:0007744" key="20">
    <source>
        <dbReference type="PDB" id="4CSM"/>
    </source>
</evidence>
<evidence type="ECO:0007744" key="21">
    <source>
        <dbReference type="PDB" id="5CSM"/>
    </source>
</evidence>
<evidence type="ECO:0007829" key="22">
    <source>
        <dbReference type="PDB" id="1CSM"/>
    </source>
</evidence>
<evidence type="ECO:0007829" key="23">
    <source>
        <dbReference type="PDB" id="2CSM"/>
    </source>
</evidence>
<evidence type="ECO:0007829" key="24">
    <source>
        <dbReference type="PDB" id="5CSM"/>
    </source>
</evidence>
<name>CHMU_YEAST</name>
<sequence length="256" mass="29747">MDFTKPETVLNLQNIRDELVRMEDSIIFKFIERSHFATCPSVYEANHPGLEIPNFKGSFLDWALSNLEIAHSRIRRFESPDETPFFPDKIQKSFLPSINYPQILAPYAPEVNYNDKIKKVYIEKIIPLISKRDGDDKNNFGSVATRDIECLQSLSRRIHFGKFVAEAKFQSDIPLYTKLIKSKDVEGIMKNITNSAVEEKILERLTKKAEVYGVDPTNESGERRITPEYLVKIYKEIVIPITKEVEVEYLLRRLEE</sequence>
<dbReference type="EC" id="5.4.99.5" evidence="2 3 5 6 7 10"/>
<dbReference type="EMBL" id="M24517">
    <property type="protein sequence ID" value="AAB59309.1"/>
    <property type="molecule type" value="Genomic_DNA"/>
</dbReference>
<dbReference type="EMBL" id="Z49219">
    <property type="protein sequence ID" value="CAA89177.1"/>
    <property type="molecule type" value="Genomic_DNA"/>
</dbReference>
<dbReference type="EMBL" id="Z71255">
    <property type="protein sequence ID" value="CAA95004.1"/>
    <property type="molecule type" value="Genomic_DNA"/>
</dbReference>
<dbReference type="EMBL" id="AY693179">
    <property type="protein sequence ID" value="AAT93198.1"/>
    <property type="molecule type" value="Genomic_DNA"/>
</dbReference>
<dbReference type="EMBL" id="BK006949">
    <property type="protein sequence ID" value="DAA11481.1"/>
    <property type="molecule type" value="Genomic_DNA"/>
</dbReference>
<dbReference type="PIR" id="A45921">
    <property type="entry name" value="A45921"/>
</dbReference>
<dbReference type="RefSeq" id="NP_015385.1">
    <property type="nucleotide sequence ID" value="NM_001184157.1"/>
</dbReference>
<dbReference type="PDB" id="1CSM">
    <property type="method" value="X-ray"/>
    <property type="resolution" value="2.20 A"/>
    <property type="chains" value="A/B=1-256"/>
</dbReference>
<dbReference type="PDB" id="2CSM">
    <property type="method" value="X-ray"/>
    <property type="resolution" value="2.80 A"/>
    <property type="chains" value="A=1-256"/>
</dbReference>
<dbReference type="PDB" id="3CSM">
    <property type="method" value="X-ray"/>
    <property type="resolution" value="3.00 A"/>
    <property type="chains" value="A/B=1-256"/>
</dbReference>
<dbReference type="PDB" id="4CSM">
    <property type="method" value="X-ray"/>
    <property type="resolution" value="2.80 A"/>
    <property type="chains" value="A/B=1-256"/>
</dbReference>
<dbReference type="PDB" id="5CSM">
    <property type="method" value="X-ray"/>
    <property type="resolution" value="2.00 A"/>
    <property type="chains" value="A=1-256"/>
</dbReference>
<dbReference type="PDBsum" id="1CSM"/>
<dbReference type="PDBsum" id="2CSM"/>
<dbReference type="PDBsum" id="3CSM"/>
<dbReference type="PDBsum" id="4CSM"/>
<dbReference type="PDBsum" id="5CSM"/>
<dbReference type="SMR" id="P32178"/>
<dbReference type="BioGRID" id="36233">
    <property type="interactions" value="266"/>
</dbReference>
<dbReference type="FunCoup" id="P32178">
    <property type="interactions" value="237"/>
</dbReference>
<dbReference type="IntAct" id="P32178">
    <property type="interactions" value="3"/>
</dbReference>
<dbReference type="STRING" id="4932.YPR060C"/>
<dbReference type="iPTMnet" id="P32178"/>
<dbReference type="PaxDb" id="4932-YPR060C"/>
<dbReference type="PeptideAtlas" id="P32178"/>
<dbReference type="EnsemblFungi" id="YPR060C_mRNA">
    <property type="protein sequence ID" value="YPR060C"/>
    <property type="gene ID" value="YPR060C"/>
</dbReference>
<dbReference type="GeneID" id="856173"/>
<dbReference type="KEGG" id="sce:YPR060C"/>
<dbReference type="AGR" id="SGD:S000006264"/>
<dbReference type="SGD" id="S000006264">
    <property type="gene designation" value="ARO7"/>
</dbReference>
<dbReference type="VEuPathDB" id="FungiDB:YPR060C"/>
<dbReference type="eggNOG" id="KOG0795">
    <property type="taxonomic scope" value="Eukaryota"/>
</dbReference>
<dbReference type="HOGENOM" id="CLU_057757_0_0_1"/>
<dbReference type="InParanoid" id="P32178"/>
<dbReference type="OMA" id="FLDWALM"/>
<dbReference type="OrthoDB" id="191918at2759"/>
<dbReference type="BioCyc" id="YEAST:YPR060C-MONOMER"/>
<dbReference type="BRENDA" id="5.4.99.5">
    <property type="organism ID" value="984"/>
</dbReference>
<dbReference type="UniPathway" id="UPA00120">
    <property type="reaction ID" value="UER00203"/>
</dbReference>
<dbReference type="BioGRID-ORCS" id="856173">
    <property type="hits" value="1 hit in 10 CRISPR screens"/>
</dbReference>
<dbReference type="EvolutionaryTrace" id="P32178"/>
<dbReference type="PRO" id="PR:P32178"/>
<dbReference type="Proteomes" id="UP000002311">
    <property type="component" value="Chromosome XVI"/>
</dbReference>
<dbReference type="RNAct" id="P32178">
    <property type="molecule type" value="protein"/>
</dbReference>
<dbReference type="GO" id="GO:0005737">
    <property type="term" value="C:cytoplasm"/>
    <property type="evidence" value="ECO:0007005"/>
    <property type="project" value="SGD"/>
</dbReference>
<dbReference type="GO" id="GO:0005634">
    <property type="term" value="C:nucleus"/>
    <property type="evidence" value="ECO:0000314"/>
    <property type="project" value="UniProtKB"/>
</dbReference>
<dbReference type="GO" id="GO:0004106">
    <property type="term" value="F:chorismate mutase activity"/>
    <property type="evidence" value="ECO:0000314"/>
    <property type="project" value="UniProtKB"/>
</dbReference>
<dbReference type="GO" id="GO:0072545">
    <property type="term" value="F:L-tyrosine binding"/>
    <property type="evidence" value="ECO:0000314"/>
    <property type="project" value="UniProtKB"/>
</dbReference>
<dbReference type="GO" id="GO:0120284">
    <property type="term" value="F:tryptophan binding"/>
    <property type="evidence" value="ECO:0000314"/>
    <property type="project" value="UniProtKB"/>
</dbReference>
<dbReference type="GO" id="GO:0009073">
    <property type="term" value="P:aromatic amino acid family biosynthetic process"/>
    <property type="evidence" value="ECO:0000318"/>
    <property type="project" value="GO_Central"/>
</dbReference>
<dbReference type="GO" id="GO:0046417">
    <property type="term" value="P:chorismate metabolic process"/>
    <property type="evidence" value="ECO:0000314"/>
    <property type="project" value="UniProtKB"/>
</dbReference>
<dbReference type="GO" id="GO:0009094">
    <property type="term" value="P:L-phenylalanine biosynthetic process"/>
    <property type="evidence" value="ECO:0000315"/>
    <property type="project" value="SGD"/>
</dbReference>
<dbReference type="GO" id="GO:0006571">
    <property type="term" value="P:tyrosine biosynthetic process"/>
    <property type="evidence" value="ECO:0000315"/>
    <property type="project" value="SGD"/>
</dbReference>
<dbReference type="FunFam" id="1.10.590.10:FF:000002">
    <property type="entry name" value="Chorismate mutase"/>
    <property type="match status" value="1"/>
</dbReference>
<dbReference type="Gene3D" id="1.10.590.10">
    <property type="entry name" value="Chorismate mutase, AroQ class superfamily, eukaryotic"/>
    <property type="match status" value="1"/>
</dbReference>
<dbReference type="InterPro" id="IPR036263">
    <property type="entry name" value="Chorismate_II_sf"/>
</dbReference>
<dbReference type="InterPro" id="IPR008238">
    <property type="entry name" value="Chorismate_mutase_AroQ_euk"/>
</dbReference>
<dbReference type="InterPro" id="IPR037039">
    <property type="entry name" value="CM_AroQ_sf_eucaryotic"/>
</dbReference>
<dbReference type="InterPro" id="IPR002701">
    <property type="entry name" value="CM_II_prokaryot"/>
</dbReference>
<dbReference type="NCBIfam" id="TIGR01802">
    <property type="entry name" value="CM_pl-yst"/>
    <property type="match status" value="1"/>
</dbReference>
<dbReference type="PANTHER" id="PTHR21145">
    <property type="entry name" value="CHORISMATE MUTASE"/>
    <property type="match status" value="1"/>
</dbReference>
<dbReference type="PANTHER" id="PTHR21145:SF12">
    <property type="entry name" value="CHORISMATE MUTASE"/>
    <property type="match status" value="1"/>
</dbReference>
<dbReference type="Pfam" id="PF01817">
    <property type="entry name" value="CM_2"/>
    <property type="match status" value="1"/>
</dbReference>
<dbReference type="PIRSF" id="PIRSF017318">
    <property type="entry name" value="Chor_mut_AroQ_eu"/>
    <property type="match status" value="1"/>
</dbReference>
<dbReference type="SUPFAM" id="SSF48600">
    <property type="entry name" value="Chorismate mutase II"/>
    <property type="match status" value="1"/>
</dbReference>
<dbReference type="PROSITE" id="PS51169">
    <property type="entry name" value="CHORISMATE_MUT_3"/>
    <property type="match status" value="1"/>
</dbReference>